<accession>Q12767</accession>
<accession>C9JL75</accession>
<accession>O75536</accession>
<accession>Q86XF1</accession>
<proteinExistence type="evidence at protein level"/>
<dbReference type="EMBL" id="D83779">
    <property type="protein sequence ID" value="BAA12108.2"/>
    <property type="status" value="ALT_INIT"/>
    <property type="molecule type" value="mRNA"/>
</dbReference>
<dbReference type="EMBL" id="BC045540">
    <property type="protein sequence ID" value="AAH45540.1"/>
    <property type="molecule type" value="mRNA"/>
</dbReference>
<dbReference type="EMBL" id="AC100787">
    <property type="status" value="NOT_ANNOTATED_CDS"/>
    <property type="molecule type" value="Genomic_DNA"/>
</dbReference>
<dbReference type="EMBL" id="KF456321">
    <property type="status" value="NOT_ANNOTATED_CDS"/>
    <property type="molecule type" value="Genomic_DNA"/>
</dbReference>
<dbReference type="EMBL" id="AF070545">
    <property type="protein sequence ID" value="AAC28636.1"/>
    <property type="molecule type" value="mRNA"/>
</dbReference>
<dbReference type="CCDS" id="CCDS32732.1">
    <molecule id="Q12767-1"/>
</dbReference>
<dbReference type="CCDS" id="CCDS82204.1">
    <molecule id="Q12767-3"/>
</dbReference>
<dbReference type="RefSeq" id="NP_001308077.1">
    <molecule id="Q12767-3"/>
    <property type="nucleotide sequence ID" value="NM_001321148.2"/>
</dbReference>
<dbReference type="RefSeq" id="NP_001308078.1">
    <property type="nucleotide sequence ID" value="NM_001321149.1"/>
</dbReference>
<dbReference type="RefSeq" id="NP_055553.3">
    <molecule id="Q12767-1"/>
    <property type="nucleotide sequence ID" value="NM_014738.5"/>
</dbReference>
<dbReference type="RefSeq" id="XP_047293128.1">
    <molecule id="Q12767-1"/>
    <property type="nucleotide sequence ID" value="XM_047437172.1"/>
</dbReference>
<dbReference type="RefSeq" id="XP_054173983.1">
    <molecule id="Q12767-1"/>
    <property type="nucleotide sequence ID" value="XM_054318008.1"/>
</dbReference>
<dbReference type="BioGRID" id="115117">
    <property type="interactions" value="35"/>
</dbReference>
<dbReference type="FunCoup" id="Q12767">
    <property type="interactions" value="699"/>
</dbReference>
<dbReference type="IntAct" id="Q12767">
    <property type="interactions" value="27"/>
</dbReference>
<dbReference type="MINT" id="Q12767"/>
<dbReference type="STRING" id="9606.ENSP00000364397"/>
<dbReference type="TCDB" id="3.A.3.2.47">
    <property type="family name" value="the p-type atpase (p-atpase) superfamily"/>
</dbReference>
<dbReference type="GlyCosmos" id="Q12767">
    <property type="glycosylation" value="4 sites, No reported glycans"/>
</dbReference>
<dbReference type="GlyGen" id="Q12767">
    <property type="glycosylation" value="3 sites, 3 N-linked glycans (3 sites)"/>
</dbReference>
<dbReference type="iPTMnet" id="Q12767"/>
<dbReference type="PhosphoSitePlus" id="Q12767"/>
<dbReference type="SwissPalm" id="Q12767"/>
<dbReference type="BioMuta" id="TMEM94"/>
<dbReference type="DMDM" id="2495718"/>
<dbReference type="jPOST" id="Q12767"/>
<dbReference type="MassIVE" id="Q12767"/>
<dbReference type="PaxDb" id="9606-ENSP00000313885"/>
<dbReference type="PeptideAtlas" id="Q12767"/>
<dbReference type="ProteomicsDB" id="10665"/>
<dbReference type="ProteomicsDB" id="58909">
    <molecule id="Q12767-1"/>
</dbReference>
<dbReference type="ProteomicsDB" id="58910">
    <molecule id="Q12767-2"/>
</dbReference>
<dbReference type="Antibodypedia" id="19552">
    <property type="antibodies" value="24 antibodies from 15 providers"/>
</dbReference>
<dbReference type="DNASU" id="9772"/>
<dbReference type="Ensembl" id="ENST00000314256.12">
    <molecule id="Q12767-1"/>
    <property type="protein sequence ID" value="ENSP00000313885.7"/>
    <property type="gene ID" value="ENSG00000177728.17"/>
</dbReference>
<dbReference type="Ensembl" id="ENST00000375248.9">
    <molecule id="Q12767-3"/>
    <property type="protein sequence ID" value="ENSP00000364397.5"/>
    <property type="gene ID" value="ENSG00000177728.17"/>
</dbReference>
<dbReference type="GeneID" id="9772"/>
<dbReference type="KEGG" id="hsa:9772"/>
<dbReference type="MANE-Select" id="ENST00000314256.12">
    <property type="protein sequence ID" value="ENSP00000313885.7"/>
    <property type="RefSeq nucleotide sequence ID" value="NM_014738.6"/>
    <property type="RefSeq protein sequence ID" value="NP_055553.3"/>
</dbReference>
<dbReference type="UCSC" id="uc002jnz.5">
    <molecule id="Q12767-1"/>
    <property type="organism name" value="human"/>
</dbReference>
<dbReference type="AGR" id="HGNC:28983"/>
<dbReference type="CTD" id="9772"/>
<dbReference type="DisGeNET" id="9772"/>
<dbReference type="GeneCards" id="TMEM94"/>
<dbReference type="HGNC" id="HGNC:28983">
    <property type="gene designation" value="TMEM94"/>
</dbReference>
<dbReference type="HPA" id="ENSG00000177728">
    <property type="expression patterns" value="Low tissue specificity"/>
</dbReference>
<dbReference type="MalaCards" id="TMEM94"/>
<dbReference type="MIM" id="618163">
    <property type="type" value="gene"/>
</dbReference>
<dbReference type="MIM" id="618316">
    <property type="type" value="phenotype"/>
</dbReference>
<dbReference type="neXtProt" id="NX_Q12767"/>
<dbReference type="OpenTargets" id="ENSG00000177728"/>
<dbReference type="Orphanet" id="562569">
    <property type="disease" value="TMEM94-associated congenital heart defect-facial dysmorphism-developmental delay syndrome"/>
</dbReference>
<dbReference type="PharmGKB" id="PA142671623"/>
<dbReference type="VEuPathDB" id="HostDB:ENSG00000177728"/>
<dbReference type="eggNOG" id="KOG4383">
    <property type="taxonomic scope" value="Eukaryota"/>
</dbReference>
<dbReference type="GeneTree" id="ENSGT00390000016550"/>
<dbReference type="InParanoid" id="Q12767"/>
<dbReference type="OMA" id="GCAMQTP"/>
<dbReference type="OrthoDB" id="5568754at2759"/>
<dbReference type="PAN-GO" id="Q12767">
    <property type="GO annotations" value="0 GO annotations based on evolutionary models"/>
</dbReference>
<dbReference type="PhylomeDB" id="Q12767"/>
<dbReference type="TreeFam" id="TF314852"/>
<dbReference type="PathwayCommons" id="Q12767"/>
<dbReference type="SignaLink" id="Q12767"/>
<dbReference type="BioGRID-ORCS" id="9772">
    <property type="hits" value="28 hits in 1147 CRISPR screens"/>
</dbReference>
<dbReference type="ChiTaRS" id="TMEM94">
    <property type="organism name" value="human"/>
</dbReference>
<dbReference type="GenomeRNAi" id="9772"/>
<dbReference type="Pharos" id="Q12767">
    <property type="development level" value="Tdark"/>
</dbReference>
<dbReference type="PRO" id="PR:Q12767"/>
<dbReference type="Proteomes" id="UP000005640">
    <property type="component" value="Chromosome 17"/>
</dbReference>
<dbReference type="RNAct" id="Q12767">
    <property type="molecule type" value="protein"/>
</dbReference>
<dbReference type="Bgee" id="ENSG00000177728">
    <property type="expression patterns" value="Expressed in right hemisphere of cerebellum and 106 other cell types or tissues"/>
</dbReference>
<dbReference type="ExpressionAtlas" id="Q12767">
    <property type="expression patterns" value="baseline and differential"/>
</dbReference>
<dbReference type="GO" id="GO:0005789">
    <property type="term" value="C:endoplasmic reticulum membrane"/>
    <property type="evidence" value="ECO:0000314"/>
    <property type="project" value="UniProtKB"/>
</dbReference>
<dbReference type="GO" id="GO:0015444">
    <property type="term" value="F:P-type magnesium transporter activity"/>
    <property type="evidence" value="ECO:0000314"/>
    <property type="project" value="UniProtKB"/>
</dbReference>
<dbReference type="GO" id="GO:0010961">
    <property type="term" value="P:intracellular magnesium ion homeostasis"/>
    <property type="evidence" value="ECO:0000250"/>
    <property type="project" value="UniProtKB"/>
</dbReference>
<dbReference type="GO" id="GO:0160176">
    <property type="term" value="P:magnesium ion transport from cytosol to endoplasmic reticulum"/>
    <property type="evidence" value="ECO:0000315"/>
    <property type="project" value="UniProtKB"/>
</dbReference>
<dbReference type="Gene3D" id="1.20.1110.10">
    <property type="entry name" value="Calcium-transporting ATPase, transmembrane domain"/>
    <property type="match status" value="1"/>
</dbReference>
<dbReference type="InterPro" id="IPR023298">
    <property type="entry name" value="ATPase_P-typ_TM_dom_sf"/>
</dbReference>
<dbReference type="InterPro" id="IPR039720">
    <property type="entry name" value="TMEM94"/>
</dbReference>
<dbReference type="PANTHER" id="PTHR13219">
    <property type="entry name" value="TRANSMEMBRANE PROTEIN 94"/>
    <property type="match status" value="1"/>
</dbReference>
<dbReference type="PANTHER" id="PTHR13219:SF6">
    <property type="entry name" value="TRANSMEMBRANE PROTEIN 94"/>
    <property type="match status" value="1"/>
</dbReference>
<dbReference type="SUPFAM" id="SSF81665">
    <property type="entry name" value="Calcium ATPase, transmembrane domain M"/>
    <property type="match status" value="1"/>
</dbReference>
<gene>
    <name evidence="12" type="primary">TMEM94</name>
    <name evidence="6" type="synonym">ERMA</name>
    <name evidence="11" type="synonym">KIAA0195</name>
</gene>
<comment type="function">
    <text evidence="4">Could function in the uptake of Mg(2+) from the cytosol into the endoplasmic reticulum and regulate intracellular Mg(2+) homeostasis.</text>
</comment>
<comment type="subunit">
    <text evidence="4">Forms homooligomers.</text>
</comment>
<comment type="subcellular location">
    <subcellularLocation>
        <location evidence="4">Endoplasmic reticulum membrane</location>
        <topology evidence="4">Multi-pass membrane protein</topology>
    </subcellularLocation>
</comment>
<comment type="alternative products">
    <event type="alternative splicing"/>
    <isoform>
        <id>Q12767-1</id>
        <name>1</name>
        <sequence type="displayed"/>
    </isoform>
    <isoform>
        <id>Q12767-2</id>
        <name>2</name>
        <sequence type="described" ref="VSP_011043"/>
    </isoform>
    <isoform>
        <id>Q12767-3</id>
        <name>3</name>
        <sequence type="described" ref="VSP_060138"/>
    </isoform>
</comment>
<comment type="tissue specificity">
    <text evidence="5">Expressed ubiquitously.</text>
</comment>
<comment type="disease" evidence="3">
    <disease id="DI-05469">
        <name>Intellectual developmental disorder with cardiac defects and dysmorphic facies</name>
        <acronym>IDDCDF</acronym>
        <description>An autosomal recessive neurodevelopmental disorder characterized by global developmental delay, intellectual disability, congenital heart malformations, and facial dysmorphism. Dysmorphic features include triangular face, deep set eyes, broad nasal root and tip and anteverted nostrils, thick arched eye brows, hypertrichosis, pointed chin, and hypertelorism.</description>
        <dbReference type="MIM" id="618316"/>
    </disease>
    <text>The disease is caused by variants affecting the gene represented in this entry.</text>
</comment>
<comment type="caution">
    <text evidence="7">Although it has been proposed to function as a new cation transport ATPase (P-type) and serve as an endoplasmic reticulum magnesium-transporting P-type ATPase, these claims are debated and require further confirmation.</text>
</comment>
<comment type="sequence caution" evidence="9">
    <conflict type="erroneous initiation">
        <sequence resource="EMBL-CDS" id="BAA12108"/>
    </conflict>
    <text>Extended N-terminus.</text>
</comment>
<keyword id="KW-0025">Alternative splicing</keyword>
<keyword id="KW-0225">Disease variant</keyword>
<keyword id="KW-0256">Endoplasmic reticulum</keyword>
<keyword id="KW-0325">Glycoprotein</keyword>
<keyword id="KW-0991">Intellectual disability</keyword>
<keyword id="KW-0406">Ion transport</keyword>
<keyword id="KW-0472">Membrane</keyword>
<keyword id="KW-0597">Phosphoprotein</keyword>
<keyword id="KW-1267">Proteomics identification</keyword>
<keyword id="KW-1185">Reference proteome</keyword>
<keyword id="KW-0812">Transmembrane</keyword>
<keyword id="KW-1133">Transmembrane helix</keyword>
<keyword id="KW-0813">Transport</keyword>
<sequence>MDLKEKHLGEPPSALGLSTRKALSVLKEQLEAVLEGHLRERKKCLTWKEVWRSSFLHHSNRCSCFHWPGASLMLLAVLLLLGCCGGQPAGSRGVGLVNASALFLLLLLNLVLIGRQDRLKRREVERRLRGIIDQIQDALRDGREIQWPSAMYPDLHMPFAPSWSLHWAYRDGHLVNLPVSLLVEGDIIALRPGQESFASLRGIKDDEHIVLEPGDLFPPFSPPPSPRGEVERGPQSPQQHRLFRVLETPVIDNIRWCLDMALSRPVTALDNERFTVQSVMLHYAVPVVLAGFLITNALRFIFSAPGVTSWQYTLLQLQVNGVLPILPLLFPVLWVLATACGEARVLAQMSKASPSSLLAKFSEDTLSSYTEAVSSQEMLRCIWGHFLRVLGGTSPTLSHSSSLLHSLGSVTVLCCVDKQGILSWPNPSPETVLFFSGKVEPPHSSHEDLTDGLSTRSFCHPEPHERDALLAGSLNNTLHLSNEQERGDWPGEAPKPPEPYSHHKAHGRSKHPSGSNVSFSRDTEGGEEEPSKTQPGMESDPYEAEDFVCDYHLEMLSLSQDQQNPSCIQFDDSNWQLHLTSLKPLGLNVLLNLCDASVTERLCRFSDHLCNIALQESHSAVLPVHVPWGLCELARLIGFTPGAKELFKQENHLALYRLPSAETMKETSLGRLSCVTKRRPPLSHMISLFIKDTTTSTEQMLSHGTADVVLEACTDFWDGADIYPLSGSDRKKVLDFYQRACLSGYCSAFAYKPMNCALSSQLNGKCIELVQVPGQSSIFTMCELPSTIPIKQNARRSSWSSDEGIGEVLEKEDCMQALSGQIFMGMVSSQYQARLDIVRLIDGLVNACIRFVYFSLEDELKSKVFAEKMGLETGWNCHISLTPNGDMPGSEIPPSSPSHAGSLHDDLNQVSRDDAEGLLLMEEEGHSDLISFQPTDSDIPSFLEDSNRAKLPRGIHQVRPHLQNIDNVPLLVPLFTDCTPETMCEMIKIMQEYGEVTCCLGSSANLRNSCLFLQSDISIALDPLYPSRCSWETFGYATSISMAQASDGLSPLQLSGQLNSLPCSLTFRQEETISIIRLIEQARHATYGIRKCFLFLLQCQLTLVVIQFLSCLVQLPPLLSTTDILWLSCFCYPLLSISLLGKPPHSSIMSMATGKNLQSIPKKTQHYFLLCFLLKFSLTISSCLICFGFTLQSFCDSSRDRNLTNCSSVMLPSNDDRAPAWFEDFANGLLSAQKLTAALIVLHTVFISITHVHRTKPLWRKSPLTNLWWAVTVPVVLLGQVVQTAVDLQLWTHRDSHVHFGLEDVPLLTWLLGCLSLVLVVVTNEIVKLHEIRVRVRYQKRQKLQFETKLGMNSPF</sequence>
<organism>
    <name type="scientific">Homo sapiens</name>
    <name type="common">Human</name>
    <dbReference type="NCBI Taxonomy" id="9606"/>
    <lineage>
        <taxon>Eukaryota</taxon>
        <taxon>Metazoa</taxon>
        <taxon>Chordata</taxon>
        <taxon>Craniata</taxon>
        <taxon>Vertebrata</taxon>
        <taxon>Euteleostomi</taxon>
        <taxon>Mammalia</taxon>
        <taxon>Eutheria</taxon>
        <taxon>Euarchontoglires</taxon>
        <taxon>Primates</taxon>
        <taxon>Haplorrhini</taxon>
        <taxon>Catarrhini</taxon>
        <taxon>Hominidae</taxon>
        <taxon>Homo</taxon>
    </lineage>
</organism>
<name>TMM94_HUMAN</name>
<feature type="chain" id="PRO_0000050731" description="Transmembrane protein 94">
    <location>
        <begin position="1"/>
        <end position="1356"/>
    </location>
</feature>
<feature type="topological domain" description="Cytoplasmic" evidence="4">
    <location>
        <begin position="1"/>
        <end position="64"/>
    </location>
</feature>
<feature type="transmembrane region" description="Helical" evidence="1">
    <location>
        <begin position="65"/>
        <end position="85"/>
    </location>
</feature>
<feature type="topological domain" description="Lumenal" evidence="10">
    <location>
        <begin position="86"/>
        <end position="92"/>
    </location>
</feature>
<feature type="transmembrane region" description="Helical" evidence="1">
    <location>
        <begin position="93"/>
        <end position="113"/>
    </location>
</feature>
<feature type="topological domain" description="Cytoplasmic" evidence="10">
    <location>
        <begin position="114"/>
        <end position="273"/>
    </location>
</feature>
<feature type="transmembrane region" description="Helical" evidence="1">
    <location>
        <begin position="274"/>
        <end position="294"/>
    </location>
</feature>
<feature type="topological domain" description="Lumenal" evidence="10">
    <location>
        <begin position="295"/>
        <end position="320"/>
    </location>
</feature>
<feature type="transmembrane region" description="Helical" evidence="1">
    <location>
        <begin position="321"/>
        <end position="341"/>
    </location>
</feature>
<feature type="topological domain" description="Cytoplasmic" evidence="10">
    <location>
        <begin position="342"/>
        <end position="1092"/>
    </location>
</feature>
<feature type="transmembrane region" description="Helical" evidence="1">
    <location>
        <begin position="1093"/>
        <end position="1113"/>
    </location>
</feature>
<feature type="topological domain" description="Lumenal" evidence="10">
    <location>
        <begin position="1114"/>
        <end position="1120"/>
    </location>
</feature>
<feature type="transmembrane region" description="Helical" evidence="1">
    <location>
        <begin position="1121"/>
        <end position="1141"/>
    </location>
</feature>
<feature type="topological domain" description="Cytoplasmic" evidence="10">
    <location>
        <begin position="1142"/>
        <end position="1167"/>
    </location>
</feature>
<feature type="transmembrane region" description="Helical" evidence="1">
    <location>
        <begin position="1168"/>
        <end position="1188"/>
    </location>
</feature>
<feature type="topological domain" description="Lumenal" evidence="10">
    <location>
        <begin position="1189"/>
        <end position="1228"/>
    </location>
</feature>
<feature type="transmembrane region" description="Helical" evidence="1">
    <location>
        <begin position="1229"/>
        <end position="1249"/>
    </location>
</feature>
<feature type="topological domain" description="Cytoplasmic" evidence="10">
    <location>
        <begin position="1250"/>
        <end position="1261"/>
    </location>
</feature>
<feature type="transmembrane region" description="Helical" evidence="1">
    <location>
        <begin position="1262"/>
        <end position="1282"/>
    </location>
</feature>
<feature type="topological domain" description="Lumenal" evidence="10">
    <location>
        <begin position="1283"/>
        <end position="1306"/>
    </location>
</feature>
<feature type="transmembrane region" description="Helical" evidence="1">
    <location>
        <begin position="1307"/>
        <end position="1327"/>
    </location>
</feature>
<feature type="topological domain" description="Cytoplasmic" evidence="4">
    <location>
        <begin position="1328"/>
        <end position="1356"/>
    </location>
</feature>
<feature type="region of interest" description="Disordered" evidence="2">
    <location>
        <begin position="439"/>
        <end position="461"/>
    </location>
</feature>
<feature type="region of interest" description="Disordered" evidence="2">
    <location>
        <begin position="483"/>
        <end position="541"/>
    </location>
</feature>
<feature type="short sequence motif" description="DKQGIL" evidence="6">
    <location>
        <begin position="417"/>
        <end position="422"/>
    </location>
</feature>
<feature type="short sequence motif" description="GMN; metal-binding motif" evidence="6">
    <location>
        <begin position="1351"/>
        <end position="1353"/>
    </location>
</feature>
<feature type="compositionally biased region" description="Basic and acidic residues" evidence="2">
    <location>
        <begin position="440"/>
        <end position="449"/>
    </location>
</feature>
<feature type="compositionally biased region" description="Basic residues" evidence="2">
    <location>
        <begin position="502"/>
        <end position="511"/>
    </location>
</feature>
<feature type="modified residue" description="Phosphoserine" evidence="13">
    <location>
        <position position="221"/>
    </location>
</feature>
<feature type="modified residue" description="Phosphoserine" evidence="13 14 17">
    <location>
        <position position="225"/>
    </location>
</feature>
<feature type="modified residue" description="Phosphoserine" evidence="17">
    <location>
        <position position="444"/>
    </location>
</feature>
<feature type="modified residue" description="Phosphoserine" evidence="16">
    <location>
        <position position="445"/>
    </location>
</feature>
<feature type="modified residue" description="Phosphoserine" evidence="16">
    <location>
        <position position="454"/>
    </location>
</feature>
<feature type="modified residue" description="Phosphoserine" evidence="15">
    <location>
        <position position="513"/>
    </location>
</feature>
<feature type="modified residue" description="Phosphoserine" evidence="17">
    <location>
        <position position="518"/>
    </location>
</feature>
<feature type="modified residue" description="Phosphoserine" evidence="16">
    <location>
        <position position="798"/>
    </location>
</feature>
<feature type="modified residue" description="Phosphoserine" evidence="17">
    <location>
        <position position="941"/>
    </location>
</feature>
<feature type="glycosylation site" description="N-linked (GlcNAc...) asparagine" evidence="1">
    <location>
        <position position="1202"/>
    </location>
</feature>
<feature type="glycosylation site" description="N-linked (GlcNAc...) asparagine" evidence="1">
    <location>
        <position position="1205"/>
    </location>
</feature>
<feature type="splice variant" id="VSP_060138" description="In isoform 3.">
    <original>MDLKEKHLG</original>
    <variation>MLFKQAELWMPHQGKGNKG</variation>
    <location>
        <begin position="1"/>
        <end position="9"/>
    </location>
</feature>
<feature type="splice variant" id="VSP_011043" description="In isoform 2." evidence="8">
    <original>T</original>
    <variation>TGERAPWEGVDDGGKGAPLWKSDPHIAPPSP</variation>
    <location>
        <position position="1244"/>
    </location>
</feature>
<feature type="sequence variant" id="VAR_081637" description="In IDDCDF." evidence="3">
    <location>
        <begin position="912"/>
        <end position="1356"/>
    </location>
</feature>
<feature type="sequence variant" id="VAR_019508" description="In dbSNP:rs8073809.">
    <original>I</original>
    <variation>T</variation>
    <location>
        <position position="1040"/>
    </location>
</feature>
<feature type="mutagenesis site" description="Loss of function in magnesium transport." evidence="10">
    <original>DK</original>
    <variation>AN</variation>
    <location>
        <begin position="417"/>
        <end position="418"/>
    </location>
</feature>
<feature type="mutagenesis site" description="Loss of function in magnesium transport." evidence="10">
    <original>Y</original>
    <variation>A</variation>
    <location>
        <position position="1132"/>
    </location>
</feature>
<feature type="mutagenesis site" description="Loss of function in magnesium transport. Increased degradation. No effect on homooligomerization." evidence="10">
    <original>GMN</original>
    <variation>IKL</variation>
    <location>
        <begin position="1351"/>
        <end position="1353"/>
    </location>
</feature>
<feature type="mutagenesis site" description="No effect on function in magnesium transport." evidence="10">
    <original>N</original>
    <variation>W</variation>
    <location>
        <position position="1353"/>
    </location>
</feature>
<feature type="sequence conflict" description="In Ref. 3; AAH45540." evidence="9" ref="3">
    <original>I</original>
    <variation>M</variation>
    <location>
        <position position="203"/>
    </location>
</feature>
<feature type="sequence conflict" description="In Ref. 3; AAH45540." evidence="9" ref="3">
    <original>Q</original>
    <variation>L</variation>
    <location>
        <position position="991"/>
    </location>
</feature>
<reference key="1">
    <citation type="journal article" date="1996" name="DNA Res.">
        <title>Prediction of the coding sequences of unidentified human genes. V. The coding sequences of 40 new genes (KIAA0161-KIAA0200) deduced by analysis of cDNA clones from human cell line KG-1.</title>
        <authorList>
            <person name="Nagase T."/>
            <person name="Seki N."/>
            <person name="Ishikawa K."/>
            <person name="Tanaka A."/>
            <person name="Nomura N."/>
        </authorList>
    </citation>
    <scope>NUCLEOTIDE SEQUENCE [LARGE SCALE MRNA] (ISOFORM 1)</scope>
    <scope>TISSUE SPECIFICITY</scope>
    <source>
        <tissue>Bone marrow</tissue>
    </source>
</reference>
<reference key="2">
    <citation type="journal article" date="2006" name="Nature">
        <title>DNA sequence of human chromosome 17 and analysis of rearrangement in the human lineage.</title>
        <authorList>
            <person name="Zody M.C."/>
            <person name="Garber M."/>
            <person name="Adams D.J."/>
            <person name="Sharpe T."/>
            <person name="Harrow J."/>
            <person name="Lupski J.R."/>
            <person name="Nicholson C."/>
            <person name="Searle S.M."/>
            <person name="Wilming L."/>
            <person name="Young S.K."/>
            <person name="Abouelleil A."/>
            <person name="Allen N.R."/>
            <person name="Bi W."/>
            <person name="Bloom T."/>
            <person name="Borowsky M.L."/>
            <person name="Bugalter B.E."/>
            <person name="Butler J."/>
            <person name="Chang J.L."/>
            <person name="Chen C.-K."/>
            <person name="Cook A."/>
            <person name="Corum B."/>
            <person name="Cuomo C.A."/>
            <person name="de Jong P.J."/>
            <person name="DeCaprio D."/>
            <person name="Dewar K."/>
            <person name="FitzGerald M."/>
            <person name="Gilbert J."/>
            <person name="Gibson R."/>
            <person name="Gnerre S."/>
            <person name="Goldstein S."/>
            <person name="Grafham D.V."/>
            <person name="Grocock R."/>
            <person name="Hafez N."/>
            <person name="Hagopian D.S."/>
            <person name="Hart E."/>
            <person name="Norman C.H."/>
            <person name="Humphray S."/>
            <person name="Jaffe D.B."/>
            <person name="Jones M."/>
            <person name="Kamal M."/>
            <person name="Khodiyar V.K."/>
            <person name="LaButti K."/>
            <person name="Laird G."/>
            <person name="Lehoczky J."/>
            <person name="Liu X."/>
            <person name="Lokyitsang T."/>
            <person name="Loveland J."/>
            <person name="Lui A."/>
            <person name="Macdonald P."/>
            <person name="Major J.E."/>
            <person name="Matthews L."/>
            <person name="Mauceli E."/>
            <person name="McCarroll S.A."/>
            <person name="Mihalev A.H."/>
            <person name="Mudge J."/>
            <person name="Nguyen C."/>
            <person name="Nicol R."/>
            <person name="O'Leary S.B."/>
            <person name="Osoegawa K."/>
            <person name="Schwartz D.C."/>
            <person name="Shaw-Smith C."/>
            <person name="Stankiewicz P."/>
            <person name="Steward C."/>
            <person name="Swarbreck D."/>
            <person name="Venkataraman V."/>
            <person name="Whittaker C.A."/>
            <person name="Yang X."/>
            <person name="Zimmer A.R."/>
            <person name="Bradley A."/>
            <person name="Hubbard T."/>
            <person name="Birren B.W."/>
            <person name="Rogers J."/>
            <person name="Lander E.S."/>
            <person name="Nusbaum C."/>
        </authorList>
    </citation>
    <scope>NUCLEOTIDE SEQUENCE [LARGE SCALE GENOMIC DNA]</scope>
</reference>
<reference key="3">
    <citation type="journal article" date="2004" name="Genome Res.">
        <title>The status, quality, and expansion of the NIH full-length cDNA project: the Mammalian Gene Collection (MGC).</title>
        <authorList>
            <consortium name="The MGC Project Team"/>
        </authorList>
    </citation>
    <scope>NUCLEOTIDE SEQUENCE [LARGE SCALE MRNA] (ISOFORM 1)</scope>
    <source>
        <tissue>Brain</tissue>
    </source>
</reference>
<reference key="4">
    <citation type="submission" date="1998-06" db="EMBL/GenBank/DDBJ databases">
        <authorList>
            <person name="Andersson B."/>
            <person name="Wentland M.A."/>
            <person name="Ricafrente J.Y."/>
            <person name="Liu W."/>
            <person name="Gibbs R.A."/>
        </authorList>
    </citation>
    <scope>NUCLEOTIDE SEQUENCE [MRNA] OF 1155-1356 (ISOFORM 2)</scope>
    <source>
        <tissue>Brain</tissue>
    </source>
</reference>
<reference key="5">
    <citation type="journal article" date="2008" name="Mol. Cell">
        <title>Kinase-selective enrichment enables quantitative phosphoproteomics of the kinome across the cell cycle.</title>
        <authorList>
            <person name="Daub H."/>
            <person name="Olsen J.V."/>
            <person name="Bairlein M."/>
            <person name="Gnad F."/>
            <person name="Oppermann F.S."/>
            <person name="Korner R."/>
            <person name="Greff Z."/>
            <person name="Keri G."/>
            <person name="Stemmann O."/>
            <person name="Mann M."/>
        </authorList>
    </citation>
    <scope>PHOSPHORYLATION [LARGE SCALE ANALYSIS] AT SER-221 AND SER-225</scope>
    <scope>IDENTIFICATION BY MASS SPECTROMETRY [LARGE SCALE ANALYSIS]</scope>
    <source>
        <tissue>Cervix carcinoma</tissue>
    </source>
</reference>
<reference key="6">
    <citation type="journal article" date="2009" name="Mol. Cell. Proteomics">
        <title>Large-scale proteomics analysis of the human kinome.</title>
        <authorList>
            <person name="Oppermann F.S."/>
            <person name="Gnad F."/>
            <person name="Olsen J.V."/>
            <person name="Hornberger R."/>
            <person name="Greff Z."/>
            <person name="Keri G."/>
            <person name="Mann M."/>
            <person name="Daub H."/>
        </authorList>
    </citation>
    <scope>PHOSPHORYLATION [LARGE SCALE ANALYSIS] AT SER-225</scope>
    <scope>IDENTIFICATION BY MASS SPECTROMETRY [LARGE SCALE ANALYSIS]</scope>
</reference>
<reference key="7">
    <citation type="journal article" date="2011" name="Sci. Signal.">
        <title>System-wide temporal characterization of the proteome and phosphoproteome of human embryonic stem cell differentiation.</title>
        <authorList>
            <person name="Rigbolt K.T."/>
            <person name="Prokhorova T.A."/>
            <person name="Akimov V."/>
            <person name="Henningsen J."/>
            <person name="Johansen P.T."/>
            <person name="Kratchmarova I."/>
            <person name="Kassem M."/>
            <person name="Mann M."/>
            <person name="Olsen J.V."/>
            <person name="Blagoev B."/>
        </authorList>
    </citation>
    <scope>PHOSPHORYLATION [LARGE SCALE ANALYSIS] AT SER-513</scope>
    <scope>IDENTIFICATION BY MASS SPECTROMETRY [LARGE SCALE ANALYSIS]</scope>
</reference>
<reference key="8">
    <citation type="journal article" date="2013" name="J. Proteome Res.">
        <title>Toward a comprehensive characterization of a human cancer cell phosphoproteome.</title>
        <authorList>
            <person name="Zhou H."/>
            <person name="Di Palma S."/>
            <person name="Preisinger C."/>
            <person name="Peng M."/>
            <person name="Polat A.N."/>
            <person name="Heck A.J."/>
            <person name="Mohammed S."/>
        </authorList>
    </citation>
    <scope>PHOSPHORYLATION [LARGE SCALE ANALYSIS] AT SER-445; SER-454 AND SER-798</scope>
    <scope>IDENTIFICATION BY MASS SPECTROMETRY [LARGE SCALE ANALYSIS]</scope>
    <source>
        <tissue>Cervix carcinoma</tissue>
        <tissue>Erythroleukemia</tissue>
    </source>
</reference>
<reference key="9">
    <citation type="journal article" date="2014" name="J. Proteomics">
        <title>An enzyme assisted RP-RPLC approach for in-depth analysis of human liver phosphoproteome.</title>
        <authorList>
            <person name="Bian Y."/>
            <person name="Song C."/>
            <person name="Cheng K."/>
            <person name="Dong M."/>
            <person name="Wang F."/>
            <person name="Huang J."/>
            <person name="Sun D."/>
            <person name="Wang L."/>
            <person name="Ye M."/>
            <person name="Zou H."/>
        </authorList>
    </citation>
    <scope>PHOSPHORYLATION [LARGE SCALE ANALYSIS] AT SER-225; SER-444; SER-518 AND SER-941</scope>
    <scope>IDENTIFICATION BY MASS SPECTROMETRY [LARGE SCALE ANALYSIS]</scope>
    <source>
        <tissue>Liver</tissue>
    </source>
</reference>
<reference key="10">
    <citation type="journal article" date="2024" name="Mol. Cell">
        <title>ERMA (TMEM94) is a P-type ATPase transporter for Mg2+ uptake in the endoplasmic reticulum.</title>
        <authorList>
            <person name="Vishnu N."/>
            <person name="Venkatesan M."/>
            <person name="Madaris T.R."/>
            <person name="Venkateswaran M.K."/>
            <person name="Stanley K."/>
            <person name="Ramachandran K."/>
            <person name="Chidambaram A."/>
            <person name="Madesh A.K."/>
            <person name="Yang W."/>
            <person name="Nair J."/>
            <person name="Narkunan M."/>
            <person name="Muthukumar T."/>
            <person name="Karanam V."/>
            <person name="Joseph L.C."/>
            <person name="Le A."/>
            <person name="Osidele A."/>
            <person name="Aslam M.I."/>
            <person name="Morrow J.P."/>
            <person name="Malicdan M.C."/>
            <person name="Stathopulos P.B."/>
            <person name="Madesh M."/>
        </authorList>
    </citation>
    <scope>FUNCTION</scope>
    <scope>SUBUNIT</scope>
    <scope>SUBCELLULAR LOCATION</scope>
    <scope>TOPOLOGY</scope>
    <scope>MOTIF</scope>
    <scope>MUTAGENESIS OF 417-ASP-LYS-418; TYR-1132; 1351-GLY--ASN-1353 AND ASN-1353</scope>
</reference>
<reference key="11">
    <citation type="journal article" date="2024" name="Cell Calcium">
        <title>TMEM94 cannot be called a P-type ATPase.</title>
        <authorList>
            <person name="Palmgren M."/>
            <person name="Morth J.P."/>
            <person name="Nissen P."/>
        </authorList>
    </citation>
    <scope>CAUTION</scope>
</reference>
<reference key="12">
    <citation type="journal article" date="2018" name="Am. J. Hum. Genet.">
        <title>Bi-allelic TMEM94 Truncating Variants Are Associated with Neurodevelopmental Delay, Congenital Heart Defects, and Distinct Facial Dysmorphism.</title>
        <authorList>
            <consortium name="Undiagnosed Diseases Network members"/>
            <person name="Stephen J."/>
            <person name="Maddirevula S."/>
            <person name="Nampoothiri S."/>
            <person name="Burke J.D."/>
            <person name="Herzog M."/>
            <person name="Shukla A."/>
            <person name="Steindl K."/>
            <person name="Eskin A."/>
            <person name="Patil S.J."/>
            <person name="Joset P."/>
            <person name="Lee H."/>
            <person name="Garrett L.J."/>
            <person name="Yokoyama T."/>
            <person name="Balanda N."/>
            <person name="Bodine S.P."/>
            <person name="Tolman N.J."/>
            <person name="Zerfas P.M."/>
            <person name="Zheng A."/>
            <person name="Ramantani G."/>
            <person name="Girisha K.M."/>
            <person name="Rivas C."/>
            <person name="Suresh P.V."/>
            <person name="Elkahloun A."/>
            <person name="Alsaif H.S."/>
            <person name="Wakil S.M."/>
            <person name="Mahmoud L."/>
            <person name="Ali R."/>
            <person name="Prochazkova M."/>
            <person name="Kulkarni A.B."/>
            <person name="Ben-Omran T."/>
            <person name="Colak D."/>
            <person name="Morris H.D."/>
            <person name="Rauch A."/>
            <person name="Martinez-Agosto J.A."/>
            <person name="Nelson S.F."/>
            <person name="Alkuraya F.S."/>
            <person name="Gahl W.A."/>
            <person name="Malicdan M.C.V."/>
        </authorList>
    </citation>
    <scope>VARIANT IDDCDF 912-ARG--PHE-1356 DEL</scope>
    <scope>INVOLVEMENT IN IDDCDF</scope>
</reference>
<evidence type="ECO:0000255" key="1"/>
<evidence type="ECO:0000256" key="2">
    <source>
        <dbReference type="SAM" id="MobiDB-lite"/>
    </source>
</evidence>
<evidence type="ECO:0000269" key="3">
    <source>
    </source>
</evidence>
<evidence type="ECO:0000269" key="4">
    <source>
    </source>
</evidence>
<evidence type="ECO:0000269" key="5">
    <source>
    </source>
</evidence>
<evidence type="ECO:0000303" key="6">
    <source>
    </source>
</evidence>
<evidence type="ECO:0000303" key="7">
    <source>
    </source>
</evidence>
<evidence type="ECO:0000303" key="8">
    <source ref="4"/>
</evidence>
<evidence type="ECO:0000305" key="9"/>
<evidence type="ECO:0000305" key="10">
    <source>
    </source>
</evidence>
<evidence type="ECO:0000312" key="11">
    <source>
        <dbReference type="EMBL" id="BAA12108.2"/>
    </source>
</evidence>
<evidence type="ECO:0000312" key="12">
    <source>
        <dbReference type="HGNC" id="HGNC:28983"/>
    </source>
</evidence>
<evidence type="ECO:0007744" key="13">
    <source>
    </source>
</evidence>
<evidence type="ECO:0007744" key="14">
    <source>
    </source>
</evidence>
<evidence type="ECO:0007744" key="15">
    <source>
    </source>
</evidence>
<evidence type="ECO:0007744" key="16">
    <source>
    </source>
</evidence>
<evidence type="ECO:0007744" key="17">
    <source>
    </source>
</evidence>
<protein>
    <recommendedName>
        <fullName evidence="12">Transmembrane protein 94</fullName>
    </recommendedName>
    <alternativeName>
        <fullName evidence="6">Endoplasmic reticulum magnesium ATPase</fullName>
    </alternativeName>
</protein>